<proteinExistence type="inferred from homology"/>
<reference key="1">
    <citation type="journal article" date="2005" name="J. Bacteriol.">
        <title>Genomic sequence of an otitis media isolate of nontypeable Haemophilus influenzae: comparative study with H. influenzae serotype d, strain KW20.</title>
        <authorList>
            <person name="Harrison A."/>
            <person name="Dyer D.W."/>
            <person name="Gillaspy A."/>
            <person name="Ray W.C."/>
            <person name="Mungur R."/>
            <person name="Carson M.B."/>
            <person name="Zhong H."/>
            <person name="Gipson J."/>
            <person name="Gipson M."/>
            <person name="Johnson L.S."/>
            <person name="Lewis L."/>
            <person name="Bakaletz L.O."/>
            <person name="Munson R.S. Jr."/>
        </authorList>
    </citation>
    <scope>NUCLEOTIDE SEQUENCE [LARGE SCALE GENOMIC DNA]</scope>
    <source>
        <strain>86-028NP</strain>
    </source>
</reference>
<sequence length="329" mass="38091">MQHLNELVEKAKLAIESIQDKSLTALDEIRVEYFGKKGYFTQLMQELRNVSAEERPAMGAKINEAKQAALEFLNAKKTEWEQAELNAKLEKERVDVSLPGRKVETGGLHPVTMTINRVTKFFSELGFSVENGPEIESDYYNFDALNIPKHHPARADHDTFWFNPELLLRTQTSGVQIRTMEKMQPPIRIMAPGRVYRNDYDQTHTPMFHQIELLYVDKKANFTELKGLLHDFLRAFFEEDLQVRFRPSYFPFTEPSAEVDVMGKNGKWLEVLGCGMVHPNVLRNVGIDPNEYSGFAVGMGVERLTMLRYNVTDLRSFFENDLRFLKQFK</sequence>
<keyword id="KW-0030">Aminoacyl-tRNA synthetase</keyword>
<keyword id="KW-0067">ATP-binding</keyword>
<keyword id="KW-0963">Cytoplasm</keyword>
<keyword id="KW-0436">Ligase</keyword>
<keyword id="KW-0460">Magnesium</keyword>
<keyword id="KW-0479">Metal-binding</keyword>
<keyword id="KW-0547">Nucleotide-binding</keyword>
<keyword id="KW-0648">Protein biosynthesis</keyword>
<dbReference type="EC" id="6.1.1.20" evidence="1"/>
<dbReference type="EMBL" id="CP000057">
    <property type="protein sequence ID" value="AAX88423.1"/>
    <property type="molecule type" value="Genomic_DNA"/>
</dbReference>
<dbReference type="RefSeq" id="WP_011272567.1">
    <property type="nucleotide sequence ID" value="NC_007146.2"/>
</dbReference>
<dbReference type="SMR" id="Q4QKM4"/>
<dbReference type="GeneID" id="93220358"/>
<dbReference type="KEGG" id="hit:NTHI1624"/>
<dbReference type="HOGENOM" id="CLU_025086_0_1_6"/>
<dbReference type="Proteomes" id="UP000002525">
    <property type="component" value="Chromosome"/>
</dbReference>
<dbReference type="GO" id="GO:0005737">
    <property type="term" value="C:cytoplasm"/>
    <property type="evidence" value="ECO:0007669"/>
    <property type="project" value="UniProtKB-SubCell"/>
</dbReference>
<dbReference type="GO" id="GO:0005524">
    <property type="term" value="F:ATP binding"/>
    <property type="evidence" value="ECO:0007669"/>
    <property type="project" value="UniProtKB-UniRule"/>
</dbReference>
<dbReference type="GO" id="GO:0000287">
    <property type="term" value="F:magnesium ion binding"/>
    <property type="evidence" value="ECO:0007669"/>
    <property type="project" value="UniProtKB-UniRule"/>
</dbReference>
<dbReference type="GO" id="GO:0004826">
    <property type="term" value="F:phenylalanine-tRNA ligase activity"/>
    <property type="evidence" value="ECO:0007669"/>
    <property type="project" value="UniProtKB-UniRule"/>
</dbReference>
<dbReference type="GO" id="GO:0000049">
    <property type="term" value="F:tRNA binding"/>
    <property type="evidence" value="ECO:0007669"/>
    <property type="project" value="InterPro"/>
</dbReference>
<dbReference type="GO" id="GO:0006432">
    <property type="term" value="P:phenylalanyl-tRNA aminoacylation"/>
    <property type="evidence" value="ECO:0007669"/>
    <property type="project" value="UniProtKB-UniRule"/>
</dbReference>
<dbReference type="CDD" id="cd00496">
    <property type="entry name" value="PheRS_alpha_core"/>
    <property type="match status" value="1"/>
</dbReference>
<dbReference type="FunFam" id="3.30.930.10:FF:000003">
    <property type="entry name" value="Phenylalanine--tRNA ligase alpha subunit"/>
    <property type="match status" value="1"/>
</dbReference>
<dbReference type="Gene3D" id="3.30.930.10">
    <property type="entry name" value="Bira Bifunctional Protein, Domain 2"/>
    <property type="match status" value="1"/>
</dbReference>
<dbReference type="HAMAP" id="MF_00281">
    <property type="entry name" value="Phe_tRNA_synth_alpha1"/>
    <property type="match status" value="1"/>
</dbReference>
<dbReference type="InterPro" id="IPR006195">
    <property type="entry name" value="aa-tRNA-synth_II"/>
</dbReference>
<dbReference type="InterPro" id="IPR045864">
    <property type="entry name" value="aa-tRNA-synth_II/BPL/LPL"/>
</dbReference>
<dbReference type="InterPro" id="IPR004529">
    <property type="entry name" value="Phe-tRNA-synth_IIc_asu"/>
</dbReference>
<dbReference type="InterPro" id="IPR004188">
    <property type="entry name" value="Phe-tRNA_ligase_II_N"/>
</dbReference>
<dbReference type="InterPro" id="IPR022911">
    <property type="entry name" value="Phe_tRNA_ligase_alpha1_bac"/>
</dbReference>
<dbReference type="InterPro" id="IPR002319">
    <property type="entry name" value="Phenylalanyl-tRNA_Synthase"/>
</dbReference>
<dbReference type="InterPro" id="IPR010978">
    <property type="entry name" value="tRNA-bd_arm"/>
</dbReference>
<dbReference type="NCBIfam" id="TIGR00468">
    <property type="entry name" value="pheS"/>
    <property type="match status" value="1"/>
</dbReference>
<dbReference type="PANTHER" id="PTHR11538:SF41">
    <property type="entry name" value="PHENYLALANINE--TRNA LIGASE, MITOCHONDRIAL"/>
    <property type="match status" value="1"/>
</dbReference>
<dbReference type="PANTHER" id="PTHR11538">
    <property type="entry name" value="PHENYLALANYL-TRNA SYNTHETASE"/>
    <property type="match status" value="1"/>
</dbReference>
<dbReference type="Pfam" id="PF02912">
    <property type="entry name" value="Phe_tRNA-synt_N"/>
    <property type="match status" value="1"/>
</dbReference>
<dbReference type="Pfam" id="PF01409">
    <property type="entry name" value="tRNA-synt_2d"/>
    <property type="match status" value="1"/>
</dbReference>
<dbReference type="SUPFAM" id="SSF55681">
    <property type="entry name" value="Class II aaRS and biotin synthetases"/>
    <property type="match status" value="1"/>
</dbReference>
<dbReference type="SUPFAM" id="SSF46589">
    <property type="entry name" value="tRNA-binding arm"/>
    <property type="match status" value="1"/>
</dbReference>
<dbReference type="PROSITE" id="PS50862">
    <property type="entry name" value="AA_TRNA_LIGASE_II"/>
    <property type="match status" value="1"/>
</dbReference>
<protein>
    <recommendedName>
        <fullName evidence="1">Phenylalanine--tRNA ligase alpha subunit</fullName>
        <ecNumber evidence="1">6.1.1.20</ecNumber>
    </recommendedName>
    <alternativeName>
        <fullName evidence="1">Phenylalanyl-tRNA synthetase alpha subunit</fullName>
        <shortName evidence="1">PheRS</shortName>
    </alternativeName>
</protein>
<comment type="catalytic activity">
    <reaction evidence="1">
        <text>tRNA(Phe) + L-phenylalanine + ATP = L-phenylalanyl-tRNA(Phe) + AMP + diphosphate + H(+)</text>
        <dbReference type="Rhea" id="RHEA:19413"/>
        <dbReference type="Rhea" id="RHEA-COMP:9668"/>
        <dbReference type="Rhea" id="RHEA-COMP:9699"/>
        <dbReference type="ChEBI" id="CHEBI:15378"/>
        <dbReference type="ChEBI" id="CHEBI:30616"/>
        <dbReference type="ChEBI" id="CHEBI:33019"/>
        <dbReference type="ChEBI" id="CHEBI:58095"/>
        <dbReference type="ChEBI" id="CHEBI:78442"/>
        <dbReference type="ChEBI" id="CHEBI:78531"/>
        <dbReference type="ChEBI" id="CHEBI:456215"/>
        <dbReference type="EC" id="6.1.1.20"/>
    </reaction>
</comment>
<comment type="cofactor">
    <cofactor evidence="1">
        <name>Mg(2+)</name>
        <dbReference type="ChEBI" id="CHEBI:18420"/>
    </cofactor>
    <text evidence="1">Binds 2 magnesium ions per tetramer.</text>
</comment>
<comment type="subunit">
    <text evidence="1">Tetramer of two alpha and two beta subunits.</text>
</comment>
<comment type="subcellular location">
    <subcellularLocation>
        <location evidence="1">Cytoplasm</location>
    </subcellularLocation>
</comment>
<comment type="similarity">
    <text evidence="1">Belongs to the class-II aminoacyl-tRNA synthetase family. Phe-tRNA synthetase alpha subunit type 1 subfamily.</text>
</comment>
<gene>
    <name evidence="1" type="primary">pheS</name>
    <name type="ordered locus">NTHI1624</name>
</gene>
<evidence type="ECO:0000255" key="1">
    <source>
        <dbReference type="HAMAP-Rule" id="MF_00281"/>
    </source>
</evidence>
<accession>Q4QKM4</accession>
<organism>
    <name type="scientific">Haemophilus influenzae (strain 86-028NP)</name>
    <dbReference type="NCBI Taxonomy" id="281310"/>
    <lineage>
        <taxon>Bacteria</taxon>
        <taxon>Pseudomonadati</taxon>
        <taxon>Pseudomonadota</taxon>
        <taxon>Gammaproteobacteria</taxon>
        <taxon>Pasteurellales</taxon>
        <taxon>Pasteurellaceae</taxon>
        <taxon>Haemophilus</taxon>
    </lineage>
</organism>
<feature type="chain" id="PRO_0000231986" description="Phenylalanine--tRNA ligase alpha subunit">
    <location>
        <begin position="1"/>
        <end position="329"/>
    </location>
</feature>
<feature type="binding site" evidence="1">
    <location>
        <position position="254"/>
    </location>
    <ligand>
        <name>Mg(2+)</name>
        <dbReference type="ChEBI" id="CHEBI:18420"/>
        <note>shared with beta subunit</note>
    </ligand>
</feature>
<name>SYFA_HAEI8</name>